<reference key="1">
    <citation type="submission" date="2007-10" db="EMBL/GenBank/DDBJ databases">
        <title>Complete sequence of Caldivirga maquilingensis IC-167.</title>
        <authorList>
            <consortium name="US DOE Joint Genome Institute"/>
            <person name="Copeland A."/>
            <person name="Lucas S."/>
            <person name="Lapidus A."/>
            <person name="Barry K."/>
            <person name="Glavina del Rio T."/>
            <person name="Dalin E."/>
            <person name="Tice H."/>
            <person name="Pitluck S."/>
            <person name="Saunders E."/>
            <person name="Brettin T."/>
            <person name="Bruce D."/>
            <person name="Detter J.C."/>
            <person name="Han C."/>
            <person name="Schmutz J."/>
            <person name="Larimer F."/>
            <person name="Land M."/>
            <person name="Hauser L."/>
            <person name="Kyrpides N."/>
            <person name="Ivanova N."/>
            <person name="Biddle J.F."/>
            <person name="Zhang Z."/>
            <person name="Fitz-Gibbon S.T."/>
            <person name="Lowe T.M."/>
            <person name="Saltikov C."/>
            <person name="House C.H."/>
            <person name="Richardson P."/>
        </authorList>
    </citation>
    <scope>NUCLEOTIDE SEQUENCE [LARGE SCALE GENOMIC DNA]</scope>
    <source>
        <strain>ATCC 700844 / DSM 13496 / JCM 10307 / IC-167</strain>
    </source>
</reference>
<sequence>MNIEATLKNYDLSKLNVVTIASHSSLQILRGAKRHGLGTVAVAKPGSGWFYRRFNFIDNVIEIDLGSMEQLAGDLVKNNAILIPHGSYVEYVGWRRALSMPIPTFGNRYIIEWEADQRKKMRLLEYAGIPIPRSFNDPTQVDRPVIVKLSGAKGGRGYFIAKDAGELAGKLSSINTDDYIIQEYVIGVPAYYHYFDSKVYDRVELFGMDLRYESNVDGRLFNLAEPTFVVTGNIPLVLRESLLPTVQKYGEDFSRAVAELVPPGMIGPYSLESIIKDDLSIVVFEFSGRIVAGTNVYMGVGSPYSVLYFNEPMDMGERIAHEIVNAVKRGKLINVLT</sequence>
<protein>
    <recommendedName>
        <fullName evidence="2">5-formaminoimidazole-4-carboxamide-1-(beta)-D-ribofuranosyl 5'-monophosphate synthetase</fullName>
        <ecNumber evidence="2">6.3.4.23</ecNumber>
    </recommendedName>
    <alternativeName>
        <fullName evidence="2">5-aminoimidazole-4-carboxamide-1-beta-D-ribofuranosyl 5'-monophosphate--formate ligase</fullName>
    </alternativeName>
</protein>
<feature type="chain" id="PRO_0000348613" description="5-formaminoimidazole-4-carboxamide-1-(beta)-D-ribofuranosyl 5'-monophosphate synthetase">
    <location>
        <begin position="1"/>
        <end position="337"/>
    </location>
</feature>
<feature type="domain" description="ATP-grasp" evidence="2">
    <location>
        <begin position="121"/>
        <end position="328"/>
    </location>
</feature>
<feature type="binding site" evidence="2">
    <location>
        <position position="23"/>
    </location>
    <ligand>
        <name>5-amino-1-(5-phospho-beta-D-ribosyl)imidazole-4-carboxamide</name>
        <dbReference type="ChEBI" id="CHEBI:58475"/>
    </ligand>
</feature>
<feature type="binding site" evidence="2">
    <location>
        <position position="87"/>
    </location>
    <ligand>
        <name>5-amino-1-(5-phospho-beta-D-ribosyl)imidazole-4-carboxamide</name>
        <dbReference type="ChEBI" id="CHEBI:58475"/>
    </ligand>
</feature>
<feature type="binding site" evidence="2">
    <location>
        <begin position="144"/>
        <end position="191"/>
    </location>
    <ligand>
        <name>ATP</name>
        <dbReference type="ChEBI" id="CHEBI:30616"/>
    </ligand>
</feature>
<feature type="binding site" evidence="2">
    <location>
        <position position="213"/>
    </location>
    <ligand>
        <name>ATP</name>
        <dbReference type="ChEBI" id="CHEBI:30616"/>
    </ligand>
</feature>
<feature type="binding site" evidence="2">
    <location>
        <position position="233"/>
    </location>
    <ligand>
        <name>5-amino-1-(5-phospho-beta-D-ribosyl)imidazole-4-carboxamide</name>
        <dbReference type="ChEBI" id="CHEBI:58475"/>
    </ligand>
</feature>
<feature type="binding site" evidence="2">
    <location>
        <position position="272"/>
    </location>
    <ligand>
        <name>Mg(2+)</name>
        <dbReference type="ChEBI" id="CHEBI:18420"/>
    </ligand>
</feature>
<feature type="binding site" evidence="2">
    <location>
        <position position="285"/>
    </location>
    <ligand>
        <name>Mg(2+)</name>
        <dbReference type="ChEBI" id="CHEBI:18420"/>
    </ligand>
</feature>
<comment type="function">
    <text evidence="2">Catalyzes the ATP- and formate-dependent formylation of 5-aminoimidazole-4-carboxamide-1-beta-d-ribofuranosyl 5'-monophosphate (AICAR) to 5-formaminoimidazole-4-carboxamide-1-beta-d-ribofuranosyl 5'-monophosphate (FAICAR) in the absence of folates.</text>
</comment>
<comment type="catalytic activity">
    <reaction evidence="2">
        <text>5-amino-1-(5-phospho-beta-D-ribosyl)imidazole-4-carboxamide + formate + ATP = 5-formamido-1-(5-phospho-D-ribosyl)imidazole-4-carboxamide + ADP + phosphate</text>
        <dbReference type="Rhea" id="RHEA:24836"/>
        <dbReference type="ChEBI" id="CHEBI:15740"/>
        <dbReference type="ChEBI" id="CHEBI:30616"/>
        <dbReference type="ChEBI" id="CHEBI:43474"/>
        <dbReference type="ChEBI" id="CHEBI:58467"/>
        <dbReference type="ChEBI" id="CHEBI:58475"/>
        <dbReference type="ChEBI" id="CHEBI:456216"/>
        <dbReference type="EC" id="6.3.4.23"/>
    </reaction>
</comment>
<comment type="cofactor">
    <cofactor evidence="1">
        <name>Mg(2+)</name>
        <dbReference type="ChEBI" id="CHEBI:18420"/>
    </cofactor>
    <cofactor evidence="1">
        <name>Mn(2+)</name>
        <dbReference type="ChEBI" id="CHEBI:29035"/>
    </cofactor>
    <text evidence="1">Binds 1 Mg(2+) or Mn(2+) ion per subunit.</text>
</comment>
<comment type="pathway">
    <text evidence="2">Purine metabolism; IMP biosynthesis via de novo pathway; 5-formamido-1-(5-phospho-D-ribosyl)imidazole-4-carboxamide from 5-amino-1-(5-phospho-D-ribosyl)imidazole-4-carboxamide (formate route): step 1/1.</text>
</comment>
<comment type="similarity">
    <text evidence="2">Belongs to the phosphohexose mutase family.</text>
</comment>
<gene>
    <name evidence="2" type="primary">purP</name>
    <name type="ordered locus">Cmaq_0022</name>
</gene>
<name>PURP_CALMQ</name>
<evidence type="ECO:0000250" key="1"/>
<evidence type="ECO:0000255" key="2">
    <source>
        <dbReference type="HAMAP-Rule" id="MF_01163"/>
    </source>
</evidence>
<accession>A8M9J5</accession>
<proteinExistence type="inferred from homology"/>
<dbReference type="EC" id="6.3.4.23" evidence="2"/>
<dbReference type="EMBL" id="CP000852">
    <property type="protein sequence ID" value="ABW00876.1"/>
    <property type="molecule type" value="Genomic_DNA"/>
</dbReference>
<dbReference type="SMR" id="A8M9J5"/>
<dbReference type="STRING" id="397948.Cmaq_0022"/>
<dbReference type="KEGG" id="cma:Cmaq_0022"/>
<dbReference type="eggNOG" id="arCOG04346">
    <property type="taxonomic scope" value="Archaea"/>
</dbReference>
<dbReference type="HOGENOM" id="CLU_065084_0_0_2"/>
<dbReference type="UniPathway" id="UPA00074">
    <property type="reaction ID" value="UER00134"/>
</dbReference>
<dbReference type="Proteomes" id="UP000001137">
    <property type="component" value="Chromosome"/>
</dbReference>
<dbReference type="GO" id="GO:0005524">
    <property type="term" value="F:ATP binding"/>
    <property type="evidence" value="ECO:0007669"/>
    <property type="project" value="UniProtKB-KW"/>
</dbReference>
<dbReference type="GO" id="GO:0016879">
    <property type="term" value="F:ligase activity, forming carbon-nitrogen bonds"/>
    <property type="evidence" value="ECO:0007669"/>
    <property type="project" value="UniProtKB-UniRule"/>
</dbReference>
<dbReference type="GO" id="GO:0000287">
    <property type="term" value="F:magnesium ion binding"/>
    <property type="evidence" value="ECO:0007669"/>
    <property type="project" value="InterPro"/>
</dbReference>
<dbReference type="GO" id="GO:0006189">
    <property type="term" value="P:'de novo' IMP biosynthetic process"/>
    <property type="evidence" value="ECO:0007669"/>
    <property type="project" value="UniProtKB-UniRule"/>
</dbReference>
<dbReference type="Gene3D" id="3.40.50.20">
    <property type="match status" value="1"/>
</dbReference>
<dbReference type="Gene3D" id="3.30.1490.20">
    <property type="entry name" value="ATP-grasp fold, A domain"/>
    <property type="match status" value="1"/>
</dbReference>
<dbReference type="Gene3D" id="3.30.470.20">
    <property type="entry name" value="ATP-grasp fold, B domain"/>
    <property type="match status" value="1"/>
</dbReference>
<dbReference type="HAMAP" id="MF_01163">
    <property type="entry name" value="IMP_biosynth_PurP"/>
    <property type="match status" value="1"/>
</dbReference>
<dbReference type="InterPro" id="IPR011761">
    <property type="entry name" value="ATP-grasp"/>
</dbReference>
<dbReference type="InterPro" id="IPR013815">
    <property type="entry name" value="ATP_grasp_subdomain_1"/>
</dbReference>
<dbReference type="InterPro" id="IPR023656">
    <property type="entry name" value="IMP_biosynth_PurP"/>
</dbReference>
<dbReference type="InterPro" id="IPR009720">
    <property type="entry name" value="IMP_biosynth_PurP_C"/>
</dbReference>
<dbReference type="InterPro" id="IPR010672">
    <property type="entry name" value="IMP_biosynth_PurP_N"/>
</dbReference>
<dbReference type="InterPro" id="IPR016185">
    <property type="entry name" value="PreATP-grasp_dom_sf"/>
</dbReference>
<dbReference type="PANTHER" id="PTHR38147:SF2">
    <property type="entry name" value="5-FORMAMINOIMIDAZOLE-4-CARBOXAMIDE-1-(BETA)-D-RIBOFURANOSYL 5'-MONOPHOSPHATE SYNTHETASE"/>
    <property type="match status" value="1"/>
</dbReference>
<dbReference type="PANTHER" id="PTHR38147">
    <property type="entry name" value="5-FORMAMINOIMIDAZOLE-4-CARBOXAMIDE-1-(BETA)-D-RIBOFURANOSYL 5'-MONOPHOSPHATE SYNTHETASE-RELATED"/>
    <property type="match status" value="1"/>
</dbReference>
<dbReference type="Pfam" id="PF06849">
    <property type="entry name" value="DUF1246"/>
    <property type="match status" value="1"/>
</dbReference>
<dbReference type="Pfam" id="PF06973">
    <property type="entry name" value="DUF1297"/>
    <property type="match status" value="1"/>
</dbReference>
<dbReference type="PIRSF" id="PIRSF004602">
    <property type="entry name" value="ATPgrasp_PurP"/>
    <property type="match status" value="1"/>
</dbReference>
<dbReference type="SUPFAM" id="SSF56059">
    <property type="entry name" value="Glutathione synthetase ATP-binding domain-like"/>
    <property type="match status" value="1"/>
</dbReference>
<dbReference type="SUPFAM" id="SSF52440">
    <property type="entry name" value="PreATP-grasp domain"/>
    <property type="match status" value="1"/>
</dbReference>
<dbReference type="PROSITE" id="PS50975">
    <property type="entry name" value="ATP_GRASP"/>
    <property type="match status" value="1"/>
</dbReference>
<keyword id="KW-0067">ATP-binding</keyword>
<keyword id="KW-0436">Ligase</keyword>
<keyword id="KW-0460">Magnesium</keyword>
<keyword id="KW-0464">Manganese</keyword>
<keyword id="KW-0479">Metal-binding</keyword>
<keyword id="KW-0547">Nucleotide-binding</keyword>
<keyword id="KW-0658">Purine biosynthesis</keyword>
<keyword id="KW-1185">Reference proteome</keyword>
<organism>
    <name type="scientific">Caldivirga maquilingensis (strain ATCC 700844 / DSM 13496 / JCM 10307 / IC-167)</name>
    <dbReference type="NCBI Taxonomy" id="397948"/>
    <lineage>
        <taxon>Archaea</taxon>
        <taxon>Thermoproteota</taxon>
        <taxon>Thermoprotei</taxon>
        <taxon>Thermoproteales</taxon>
        <taxon>Thermoproteaceae</taxon>
        <taxon>Caldivirga</taxon>
    </lineage>
</organism>